<sequence>MTNMRKSHPLIKIINHSFIDLPAPSNISAWWNFGSLLGVCLALQIITGLFLAMHYTADTTTAFSSVTHICRDVNYGWLIRYAHANGASMFFIFLYFHIGRGIYYGSYTFMETWNIGVLLLFAVMATAFMGYVLPWGQMSFWGATVITNLLSAIPYIGPTLVEWIWGGFSVDKATLTRFFAFHFILPFIITAMVMIHLLFLHETGSNNPSGLNSDSDKIPFHPYYTIKDILGVLFMALALLMLILFSPDLLGDPDNYTPANPLNTPPHIKPEWYFLFAYAILRSIPNKLGGVLALVFSILILMLFPSLHLSKQRSMSFRPLSQCLXWILVANLIILTWIGGQPVEHPFITIGQLASISYFCIILILMPTMSLTENKLLKW</sequence>
<comment type="function">
    <text evidence="2">Component of the ubiquinol-cytochrome c reductase complex (complex III or cytochrome b-c1 complex) that is part of the mitochondrial respiratory chain. The b-c1 complex mediates electron transfer from ubiquinol to cytochrome c. Contributes to the generation of a proton gradient across the mitochondrial membrane that is then used for ATP synthesis.</text>
</comment>
<comment type="cofactor">
    <cofactor evidence="2">
        <name>heme b</name>
        <dbReference type="ChEBI" id="CHEBI:60344"/>
    </cofactor>
    <text evidence="2">Binds 2 heme b groups non-covalently.</text>
</comment>
<comment type="subunit">
    <text evidence="2">The cytochrome bc1 complex contains 11 subunits: 3 respiratory subunits (MT-CYB, CYC1 and UQCRFS1), 2 core proteins (UQCRC1 and UQCRC2) and 6 low-molecular weight proteins (UQCRH/QCR6, UQCRB/QCR7, UQCRQ/QCR8, UQCR10/QCR9, UQCR11/QCR10 and a cleavage product of UQCRFS1). This cytochrome bc1 complex then forms a dimer.</text>
</comment>
<comment type="subcellular location">
    <subcellularLocation>
        <location evidence="2">Mitochondrion inner membrane</location>
        <topology evidence="2">Multi-pass membrane protein</topology>
    </subcellularLocation>
</comment>
<comment type="miscellaneous">
    <text evidence="1">Heme 1 (or BL or b562) is low-potential and absorbs at about 562 nm, and heme 2 (or BH or b566) is high-potential and absorbs at about 566 nm.</text>
</comment>
<comment type="similarity">
    <text evidence="3 4">Belongs to the cytochrome b family.</text>
</comment>
<comment type="caution">
    <text evidence="2">The full-length protein contains only eight transmembrane helices, not nine as predicted by bioinformatics tools.</text>
</comment>
<dbReference type="EMBL" id="L23339">
    <property type="protein sequence ID" value="AAC37686.1"/>
    <property type="molecule type" value="Genomic_DNA"/>
</dbReference>
<dbReference type="PIR" id="I48133">
    <property type="entry name" value="I48133"/>
</dbReference>
<dbReference type="GO" id="GO:0005743">
    <property type="term" value="C:mitochondrial inner membrane"/>
    <property type="evidence" value="ECO:0007669"/>
    <property type="project" value="UniProtKB-SubCell"/>
</dbReference>
<dbReference type="GO" id="GO:0045275">
    <property type="term" value="C:respiratory chain complex III"/>
    <property type="evidence" value="ECO:0007669"/>
    <property type="project" value="InterPro"/>
</dbReference>
<dbReference type="GO" id="GO:0046872">
    <property type="term" value="F:metal ion binding"/>
    <property type="evidence" value="ECO:0007669"/>
    <property type="project" value="UniProtKB-KW"/>
</dbReference>
<dbReference type="GO" id="GO:0008121">
    <property type="term" value="F:ubiquinol-cytochrome-c reductase activity"/>
    <property type="evidence" value="ECO:0007669"/>
    <property type="project" value="InterPro"/>
</dbReference>
<dbReference type="GO" id="GO:0006122">
    <property type="term" value="P:mitochondrial electron transport, ubiquinol to cytochrome c"/>
    <property type="evidence" value="ECO:0007669"/>
    <property type="project" value="TreeGrafter"/>
</dbReference>
<dbReference type="CDD" id="cd00290">
    <property type="entry name" value="cytochrome_b_C"/>
    <property type="match status" value="1"/>
</dbReference>
<dbReference type="CDD" id="cd00284">
    <property type="entry name" value="Cytochrome_b_N"/>
    <property type="match status" value="1"/>
</dbReference>
<dbReference type="FunFam" id="1.20.810.10:FF:000002">
    <property type="entry name" value="Cytochrome b"/>
    <property type="match status" value="1"/>
</dbReference>
<dbReference type="Gene3D" id="1.20.810.10">
    <property type="entry name" value="Cytochrome Bc1 Complex, Chain C"/>
    <property type="match status" value="1"/>
</dbReference>
<dbReference type="InterPro" id="IPR005798">
    <property type="entry name" value="Cyt_b/b6_C"/>
</dbReference>
<dbReference type="InterPro" id="IPR036150">
    <property type="entry name" value="Cyt_b/b6_C_sf"/>
</dbReference>
<dbReference type="InterPro" id="IPR005797">
    <property type="entry name" value="Cyt_b/b6_N"/>
</dbReference>
<dbReference type="InterPro" id="IPR027387">
    <property type="entry name" value="Cytb/b6-like_sf"/>
</dbReference>
<dbReference type="InterPro" id="IPR030689">
    <property type="entry name" value="Cytochrome_b"/>
</dbReference>
<dbReference type="InterPro" id="IPR048260">
    <property type="entry name" value="Cytochrome_b_C_euk/bac"/>
</dbReference>
<dbReference type="InterPro" id="IPR048259">
    <property type="entry name" value="Cytochrome_b_N_euk/bac"/>
</dbReference>
<dbReference type="InterPro" id="IPR016174">
    <property type="entry name" value="Di-haem_cyt_TM"/>
</dbReference>
<dbReference type="PANTHER" id="PTHR19271">
    <property type="entry name" value="CYTOCHROME B"/>
    <property type="match status" value="1"/>
</dbReference>
<dbReference type="PANTHER" id="PTHR19271:SF16">
    <property type="entry name" value="CYTOCHROME B"/>
    <property type="match status" value="1"/>
</dbReference>
<dbReference type="Pfam" id="PF00032">
    <property type="entry name" value="Cytochrom_B_C"/>
    <property type="match status" value="1"/>
</dbReference>
<dbReference type="Pfam" id="PF00033">
    <property type="entry name" value="Cytochrome_B"/>
    <property type="match status" value="1"/>
</dbReference>
<dbReference type="PIRSF" id="PIRSF038885">
    <property type="entry name" value="COB"/>
    <property type="match status" value="1"/>
</dbReference>
<dbReference type="SUPFAM" id="SSF81648">
    <property type="entry name" value="a domain/subunit of cytochrome bc1 complex (Ubiquinol-cytochrome c reductase)"/>
    <property type="match status" value="1"/>
</dbReference>
<dbReference type="SUPFAM" id="SSF81342">
    <property type="entry name" value="Transmembrane di-heme cytochromes"/>
    <property type="match status" value="1"/>
</dbReference>
<dbReference type="PROSITE" id="PS51003">
    <property type="entry name" value="CYTB_CTER"/>
    <property type="match status" value="1"/>
</dbReference>
<dbReference type="PROSITE" id="PS51002">
    <property type="entry name" value="CYTB_NTER"/>
    <property type="match status" value="1"/>
</dbReference>
<name>CYB_DACBO</name>
<proteinExistence type="inferred from homology"/>
<feature type="chain" id="PRO_0000255030" description="Cytochrome b">
    <location>
        <begin position="1"/>
        <end position="379"/>
    </location>
</feature>
<feature type="transmembrane region" description="Helical" evidence="2">
    <location>
        <begin position="33"/>
        <end position="53"/>
    </location>
</feature>
<feature type="transmembrane region" description="Helical" evidence="2">
    <location>
        <begin position="77"/>
        <end position="98"/>
    </location>
</feature>
<feature type="transmembrane region" description="Helical" evidence="2">
    <location>
        <begin position="113"/>
        <end position="133"/>
    </location>
</feature>
<feature type="transmembrane region" description="Helical" evidence="2">
    <location>
        <begin position="178"/>
        <end position="198"/>
    </location>
</feature>
<feature type="transmembrane region" description="Helical" evidence="2">
    <location>
        <begin position="226"/>
        <end position="246"/>
    </location>
</feature>
<feature type="transmembrane region" description="Helical" evidence="2">
    <location>
        <begin position="288"/>
        <end position="308"/>
    </location>
</feature>
<feature type="transmembrane region" description="Helical" evidence="2">
    <location>
        <begin position="320"/>
        <end position="340"/>
    </location>
</feature>
<feature type="transmembrane region" description="Helical" evidence="2">
    <location>
        <begin position="347"/>
        <end position="367"/>
    </location>
</feature>
<feature type="binding site" description="axial binding residue" evidence="2">
    <location>
        <position position="83"/>
    </location>
    <ligand>
        <name>heme b</name>
        <dbReference type="ChEBI" id="CHEBI:60344"/>
        <label>b562</label>
    </ligand>
    <ligandPart>
        <name>Fe</name>
        <dbReference type="ChEBI" id="CHEBI:18248"/>
    </ligandPart>
</feature>
<feature type="binding site" description="axial binding residue" evidence="2">
    <location>
        <position position="97"/>
    </location>
    <ligand>
        <name>heme b</name>
        <dbReference type="ChEBI" id="CHEBI:60344"/>
        <label>b566</label>
    </ligand>
    <ligandPart>
        <name>Fe</name>
        <dbReference type="ChEBI" id="CHEBI:18248"/>
    </ligandPart>
</feature>
<feature type="binding site" description="axial binding residue" evidence="2">
    <location>
        <position position="182"/>
    </location>
    <ligand>
        <name>heme b</name>
        <dbReference type="ChEBI" id="CHEBI:60344"/>
        <label>b562</label>
    </ligand>
    <ligandPart>
        <name>Fe</name>
        <dbReference type="ChEBI" id="CHEBI:18248"/>
    </ligandPart>
</feature>
<feature type="binding site" description="axial binding residue" evidence="2">
    <location>
        <position position="196"/>
    </location>
    <ligand>
        <name>heme b</name>
        <dbReference type="ChEBI" id="CHEBI:60344"/>
        <label>b566</label>
    </ligand>
    <ligandPart>
        <name>Fe</name>
        <dbReference type="ChEBI" id="CHEBI:18248"/>
    </ligandPart>
</feature>
<feature type="binding site" evidence="2">
    <location>
        <position position="201"/>
    </location>
    <ligand>
        <name>a ubiquinone</name>
        <dbReference type="ChEBI" id="CHEBI:16389"/>
    </ligand>
</feature>
<protein>
    <recommendedName>
        <fullName>Cytochrome b</fullName>
    </recommendedName>
    <alternativeName>
        <fullName>Complex III subunit 3</fullName>
    </alternativeName>
    <alternativeName>
        <fullName>Complex III subunit III</fullName>
    </alternativeName>
    <alternativeName>
        <fullName>Cytochrome b-c1 complex subunit 3</fullName>
    </alternativeName>
    <alternativeName>
        <fullName>Ubiquinol-cytochrome-c reductase complex cytochrome b subunit</fullName>
    </alternativeName>
</protein>
<organism>
    <name type="scientific">Dactylomys boliviensis</name>
    <name type="common">Bolivian bamboo rat</name>
    <dbReference type="NCBI Taxonomy" id="30618"/>
    <lineage>
        <taxon>Eukaryota</taxon>
        <taxon>Metazoa</taxon>
        <taxon>Chordata</taxon>
        <taxon>Craniata</taxon>
        <taxon>Vertebrata</taxon>
        <taxon>Euteleostomi</taxon>
        <taxon>Mammalia</taxon>
        <taxon>Eutheria</taxon>
        <taxon>Euarchontoglires</taxon>
        <taxon>Glires</taxon>
        <taxon>Rodentia</taxon>
        <taxon>Hystricomorpha</taxon>
        <taxon>Echimyidae</taxon>
        <taxon>Dactylomys</taxon>
    </lineage>
</organism>
<keyword id="KW-0249">Electron transport</keyword>
<keyword id="KW-0349">Heme</keyword>
<keyword id="KW-0408">Iron</keyword>
<keyword id="KW-0472">Membrane</keyword>
<keyword id="KW-0479">Metal-binding</keyword>
<keyword id="KW-0496">Mitochondrion</keyword>
<keyword id="KW-0999">Mitochondrion inner membrane</keyword>
<keyword id="KW-0679">Respiratory chain</keyword>
<keyword id="KW-0812">Transmembrane</keyword>
<keyword id="KW-1133">Transmembrane helix</keyword>
<keyword id="KW-0813">Transport</keyword>
<keyword id="KW-0830">Ubiquinone</keyword>
<accession>Q34301</accession>
<reference key="1">
    <citation type="journal article" date="1996" name="Mol. Phylogenet. Evol.">
        <title>The simultaneous diversification of South American echimyid rodents (Hystricognathi) based on complete cytochrome b sequences.</title>
        <authorList>
            <person name="Lara M.C."/>
            <person name="Patton J.L."/>
            <person name="da Silva M.N.F."/>
        </authorList>
    </citation>
    <scope>NUCLEOTIDE SEQUENCE [GENOMIC DNA]</scope>
</reference>
<evidence type="ECO:0000250" key="1"/>
<evidence type="ECO:0000250" key="2">
    <source>
        <dbReference type="UniProtKB" id="P00157"/>
    </source>
</evidence>
<evidence type="ECO:0000255" key="3">
    <source>
        <dbReference type="PROSITE-ProRule" id="PRU00967"/>
    </source>
</evidence>
<evidence type="ECO:0000255" key="4">
    <source>
        <dbReference type="PROSITE-ProRule" id="PRU00968"/>
    </source>
</evidence>
<gene>
    <name type="primary">MT-CYB</name>
    <name type="synonym">COB</name>
    <name type="synonym">CYTB</name>
    <name type="synonym">MTCYB</name>
</gene>
<geneLocation type="mitochondrion"/>